<keyword id="KW-0903">Direct protein sequencing</keyword>
<keyword id="KW-0872">Ion channel impairing toxin</keyword>
<keyword id="KW-0528">Neurotoxin</keyword>
<keyword id="KW-0964">Secreted</keyword>
<keyword id="KW-0800">Toxin</keyword>
<keyword id="KW-0738">Voltage-gated sodium channel impairing toxin</keyword>
<organism>
    <name type="scientific">Androctonus crassicauda</name>
    <name type="common">Arabian fat-tailed scorpion</name>
    <dbReference type="NCBI Taxonomy" id="122909"/>
    <lineage>
        <taxon>Eukaryota</taxon>
        <taxon>Metazoa</taxon>
        <taxon>Ecdysozoa</taxon>
        <taxon>Arthropoda</taxon>
        <taxon>Chelicerata</taxon>
        <taxon>Arachnida</taxon>
        <taxon>Scorpiones</taxon>
        <taxon>Buthida</taxon>
        <taxon>Buthoidea</taxon>
        <taxon>Buthidae</taxon>
        <taxon>Androctonus</taxon>
    </lineage>
</organism>
<evidence type="ECO:0000250" key="1"/>
<evidence type="ECO:0000269" key="2">
    <source>
    </source>
</evidence>
<proteinExistence type="evidence at protein level"/>
<sequence>DDLHPFNENNMYYGCKGLSNSNKFED</sequence>
<dbReference type="GO" id="GO:0005576">
    <property type="term" value="C:extracellular region"/>
    <property type="evidence" value="ECO:0007669"/>
    <property type="project" value="UniProtKB-SubCell"/>
</dbReference>
<dbReference type="GO" id="GO:0017080">
    <property type="term" value="F:sodium channel regulator activity"/>
    <property type="evidence" value="ECO:0007669"/>
    <property type="project" value="UniProtKB-KW"/>
</dbReference>
<dbReference type="GO" id="GO:0090729">
    <property type="term" value="F:toxin activity"/>
    <property type="evidence" value="ECO:0007669"/>
    <property type="project" value="UniProtKB-KW"/>
</dbReference>
<accession>P0C2A2</accession>
<reference key="1">
    <citation type="journal article" date="2006" name="Toxicon">
        <title>Characterization of venom components from the scorpion Androctonus crassicauda of Turkey: peptides and genes.</title>
        <authorList>
            <person name="Caliskan F."/>
            <person name="Garcia B.I."/>
            <person name="Coronas F.I.V."/>
            <person name="Batista C.V.F."/>
            <person name="Zamudio F.Z."/>
            <person name="Possani L.D."/>
        </authorList>
    </citation>
    <scope>PROTEIN SEQUENCE</scope>
    <scope>SUBUNIT</scope>
    <source>
        <tissue>Venom</tissue>
    </source>
</reference>
<feature type="chain" id="PRO_0000271329" description="Toxin b subunit alpha">
    <location>
        <begin position="1"/>
        <end position="26" status="greater than"/>
    </location>
</feature>
<feature type="non-terminal residue">
    <location>
        <position position="26"/>
    </location>
</feature>
<name>TXBA_ANDCR</name>
<protein>
    <recommendedName>
        <fullName>Toxin b subunit alpha</fullName>
    </recommendedName>
</protein>
<comment type="function">
    <text evidence="1">Binds to sodium channels (Nav) and affects the channel activation process.</text>
</comment>
<comment type="subunit">
    <text evidence="2">Toxin b is a heterodimer composed of toxin alpha and toxin beta.</text>
</comment>
<comment type="subcellular location">
    <subcellularLocation>
        <location>Secreted</location>
    </subcellularLocation>
</comment>
<comment type="tissue specificity">
    <text>Expressed by the venom gland.</text>
</comment>